<name>Y4859_BACHK</name>
<organism>
    <name type="scientific">Bacillus thuringiensis subsp. konkukian (strain 97-27)</name>
    <dbReference type="NCBI Taxonomy" id="281309"/>
    <lineage>
        <taxon>Bacteria</taxon>
        <taxon>Bacillati</taxon>
        <taxon>Bacillota</taxon>
        <taxon>Bacilli</taxon>
        <taxon>Bacillales</taxon>
        <taxon>Bacillaceae</taxon>
        <taxon>Bacillus</taxon>
        <taxon>Bacillus cereus group</taxon>
    </lineage>
</organism>
<sequence>MIVTTTSTIQGKEIIDYVDIVNGEAIMGANIVRDLFASVRDVVGGRSGAYESKLKEARDIAMEEMKTLARQKNANAIVGIDVDYEVVREGMLMVAVSGTAVRI</sequence>
<reference key="1">
    <citation type="journal article" date="2006" name="J. Bacteriol.">
        <title>Pathogenomic sequence analysis of Bacillus cereus and Bacillus thuringiensis isolates closely related to Bacillus anthracis.</title>
        <authorList>
            <person name="Han C.S."/>
            <person name="Xie G."/>
            <person name="Challacombe J.F."/>
            <person name="Altherr M.R."/>
            <person name="Bhotika S.S."/>
            <person name="Bruce D."/>
            <person name="Campbell C.S."/>
            <person name="Campbell M.L."/>
            <person name="Chen J."/>
            <person name="Chertkov O."/>
            <person name="Cleland C."/>
            <person name="Dimitrijevic M."/>
            <person name="Doggett N.A."/>
            <person name="Fawcett J.J."/>
            <person name="Glavina T."/>
            <person name="Goodwin L.A."/>
            <person name="Hill K.K."/>
            <person name="Hitchcock P."/>
            <person name="Jackson P.J."/>
            <person name="Keim P."/>
            <person name="Kewalramani A.R."/>
            <person name="Longmire J."/>
            <person name="Lucas S."/>
            <person name="Malfatti S."/>
            <person name="McMurry K."/>
            <person name="Meincke L.J."/>
            <person name="Misra M."/>
            <person name="Moseman B.L."/>
            <person name="Mundt M."/>
            <person name="Munk A.C."/>
            <person name="Okinaka R.T."/>
            <person name="Parson-Quintana B."/>
            <person name="Reilly L.P."/>
            <person name="Richardson P."/>
            <person name="Robinson D.L."/>
            <person name="Rubin E."/>
            <person name="Saunders E."/>
            <person name="Tapia R."/>
            <person name="Tesmer J.G."/>
            <person name="Thayer N."/>
            <person name="Thompson L.S."/>
            <person name="Tice H."/>
            <person name="Ticknor L.O."/>
            <person name="Wills P.L."/>
            <person name="Brettin T.S."/>
            <person name="Gilna P."/>
        </authorList>
    </citation>
    <scope>NUCLEOTIDE SEQUENCE [LARGE SCALE GENOMIC DNA]</scope>
    <source>
        <strain>97-27</strain>
    </source>
</reference>
<feature type="chain" id="PRO_0000225812" description="UPF0145 protein BT9727_4859">
    <location>
        <begin position="1"/>
        <end position="103"/>
    </location>
</feature>
<evidence type="ECO:0000255" key="1">
    <source>
        <dbReference type="HAMAP-Rule" id="MF_00338"/>
    </source>
</evidence>
<dbReference type="EMBL" id="AE017355">
    <property type="protein sequence ID" value="AAT61105.1"/>
    <property type="molecule type" value="Genomic_DNA"/>
</dbReference>
<dbReference type="RefSeq" id="WP_000637521.1">
    <property type="nucleotide sequence ID" value="NC_005957.1"/>
</dbReference>
<dbReference type="RefSeq" id="YP_039168.1">
    <property type="nucleotide sequence ID" value="NC_005957.1"/>
</dbReference>
<dbReference type="SMR" id="Q6HBA8"/>
<dbReference type="KEGG" id="btk:BT9727_4859"/>
<dbReference type="PATRIC" id="fig|281309.8.peg.5165"/>
<dbReference type="HOGENOM" id="CLU_117144_3_2_9"/>
<dbReference type="Proteomes" id="UP000001301">
    <property type="component" value="Chromosome"/>
</dbReference>
<dbReference type="Gene3D" id="3.30.110.70">
    <property type="entry name" value="Hypothetical protein apc22750. Chain B"/>
    <property type="match status" value="1"/>
</dbReference>
<dbReference type="HAMAP" id="MF_00338">
    <property type="entry name" value="UPF0145"/>
    <property type="match status" value="1"/>
</dbReference>
<dbReference type="InterPro" id="IPR035439">
    <property type="entry name" value="UPF0145_dom_sf"/>
</dbReference>
<dbReference type="InterPro" id="IPR002765">
    <property type="entry name" value="UPF0145_YbjQ-like"/>
</dbReference>
<dbReference type="NCBIfam" id="NF009495">
    <property type="entry name" value="PRK12855.1"/>
    <property type="match status" value="1"/>
</dbReference>
<dbReference type="NCBIfam" id="NF009496">
    <property type="entry name" value="PRK12856.1"/>
    <property type="match status" value="1"/>
</dbReference>
<dbReference type="PANTHER" id="PTHR34068">
    <property type="entry name" value="UPF0145 PROTEIN YBJQ"/>
    <property type="match status" value="1"/>
</dbReference>
<dbReference type="PANTHER" id="PTHR34068:SF1">
    <property type="entry name" value="UPF0145 PROTEIN YBJQ"/>
    <property type="match status" value="1"/>
</dbReference>
<dbReference type="Pfam" id="PF01906">
    <property type="entry name" value="YbjQ_1"/>
    <property type="match status" value="1"/>
</dbReference>
<dbReference type="SUPFAM" id="SSF117782">
    <property type="entry name" value="YbjQ-like"/>
    <property type="match status" value="1"/>
</dbReference>
<gene>
    <name type="ordered locus">BT9727_4859</name>
</gene>
<comment type="similarity">
    <text evidence="1">Belongs to the UPF0145 family.</text>
</comment>
<proteinExistence type="inferred from homology"/>
<accession>Q6HBA8</accession>
<protein>
    <recommendedName>
        <fullName evidence="1">UPF0145 protein BT9727_4859</fullName>
    </recommendedName>
</protein>